<protein>
    <recommendedName>
        <fullName>Extracellular metalloproteinase 1</fullName>
        <ecNumber>3.4.24.-</ecNumber>
    </recommendedName>
    <alternativeName>
        <fullName>Fungalysin MEP1</fullName>
    </alternativeName>
</protein>
<evidence type="ECO:0000250" key="1"/>
<evidence type="ECO:0000255" key="2"/>
<evidence type="ECO:0000255" key="3">
    <source>
        <dbReference type="PROSITE-ProRule" id="PRU10095"/>
    </source>
</evidence>
<evidence type="ECO:0000269" key="4">
    <source>
    </source>
</evidence>
<evidence type="ECO:0000269" key="5">
    <source>
    </source>
</evidence>
<evidence type="ECO:0000305" key="6"/>
<feature type="signal peptide" evidence="2">
    <location>
        <begin position="1"/>
        <end position="19"/>
    </location>
</feature>
<feature type="propeptide" id="PRO_0000380836" evidence="1">
    <location>
        <begin position="20"/>
        <end position="246"/>
    </location>
</feature>
<feature type="chain" id="PRO_0000380837" description="Extracellular metalloproteinase 1">
    <location>
        <begin position="247"/>
        <end position="635"/>
    </location>
</feature>
<feature type="active site" evidence="3">
    <location>
        <position position="431"/>
    </location>
</feature>
<feature type="binding site" evidence="3">
    <location>
        <position position="430"/>
    </location>
    <ligand>
        <name>Zn(2+)</name>
        <dbReference type="ChEBI" id="CHEBI:29105"/>
        <note>catalytic</note>
    </ligand>
</feature>
<feature type="binding site" evidence="3">
    <location>
        <position position="434"/>
    </location>
    <ligand>
        <name>Zn(2+)</name>
        <dbReference type="ChEBI" id="CHEBI:29105"/>
        <note>catalytic</note>
    </ligand>
</feature>
<feature type="glycosylation site" description="N-linked (GlcNAc...) asparagine" evidence="2">
    <location>
        <position position="287"/>
    </location>
</feature>
<feature type="glycosylation site" description="N-linked (GlcNAc...) asparagine" evidence="2">
    <location>
        <position position="475"/>
    </location>
</feature>
<feature type="glycosylation site" description="N-linked (GlcNAc...) asparagine" evidence="2">
    <location>
        <position position="594"/>
    </location>
</feature>
<feature type="glycosylation site" description="N-linked (GlcNAc...) asparagine" evidence="2">
    <location>
        <position position="623"/>
    </location>
</feature>
<gene>
    <name type="primary">MEP1</name>
</gene>
<reference key="1">
    <citation type="journal article" date="2002" name="Int. J. Med. Microbiol.">
        <title>Secreted proteases from pathogenic fungi.</title>
        <authorList>
            <person name="Monod M."/>
            <person name="Capoccia S."/>
            <person name="Lechenne B."/>
            <person name="Zaugg C."/>
            <person name="Holdom M."/>
            <person name="Jousson O."/>
        </authorList>
    </citation>
    <scope>NUCLEOTIDE SEQUENCE [GENOMIC DNA / MRNA]</scope>
</reference>
<reference key="2">
    <citation type="journal article" date="2004" name="Microbiology">
        <title>Multiplication of an ancestral gene encoding secreted fungalysin preceded species differentiation in the dermatophytes Trichophyton and Microsporum.</title>
        <authorList>
            <person name="Jousson O."/>
            <person name="Lechenne B."/>
            <person name="Bontems O."/>
            <person name="Capoccia S."/>
            <person name="Mignon B."/>
            <person name="Barblan J."/>
            <person name="Quadroni M."/>
            <person name="Monod M."/>
        </authorList>
    </citation>
    <scope>NUCLEOTIDE SEQUENCE [GENOMIC DNA]</scope>
    <scope>IDENTIFICATION BY MASS SPECTROMETRY</scope>
    <scope>SUBCELLULAR LOCATION</scope>
</reference>
<reference key="3">
    <citation type="journal article" date="2009" name="Eukaryot. Cell">
        <title>Gene expression profiling in the human pathogenic dermatophyte Trichophyton rubrum during growth on proteins.</title>
        <authorList>
            <person name="Zaugg C."/>
            <person name="Monod M."/>
            <person name="Weber J."/>
            <person name="Harshman K."/>
            <person name="Pradervand S."/>
            <person name="Thomas J."/>
            <person name="Bueno M."/>
            <person name="Giddey K."/>
            <person name="Staib P."/>
        </authorList>
    </citation>
    <scope>INDUCTION</scope>
</reference>
<organism>
    <name type="scientific">Trichophyton rubrum</name>
    <name type="common">Athlete's foot fungus</name>
    <name type="synonym">Epidermophyton rubrum</name>
    <dbReference type="NCBI Taxonomy" id="5551"/>
    <lineage>
        <taxon>Eukaryota</taxon>
        <taxon>Fungi</taxon>
        <taxon>Dikarya</taxon>
        <taxon>Ascomycota</taxon>
        <taxon>Pezizomycotina</taxon>
        <taxon>Eurotiomycetes</taxon>
        <taxon>Eurotiomycetidae</taxon>
        <taxon>Onygenales</taxon>
        <taxon>Arthrodermataceae</taxon>
        <taxon>Trichophyton</taxon>
    </lineage>
</organism>
<keyword id="KW-0325">Glycoprotein</keyword>
<keyword id="KW-0378">Hydrolase</keyword>
<keyword id="KW-0479">Metal-binding</keyword>
<keyword id="KW-0482">Metalloprotease</keyword>
<keyword id="KW-0645">Protease</keyword>
<keyword id="KW-0964">Secreted</keyword>
<keyword id="KW-0732">Signal</keyword>
<keyword id="KW-0843">Virulence</keyword>
<keyword id="KW-0862">Zinc</keyword>
<keyword id="KW-0865">Zymogen</keyword>
<name>MEP1_TRIRU</name>
<sequence>MHGLLLAAGLLSLPLHVLAHPQPSTSTSLAGRAGAVDLNEFRIAHRSSYTSHDEMKKLPSIASFRQGTYLEVATELVKQTMPNMEFRLVDDHYVGDSGIGHVRFRQTMHGIDIDNSDFNVNVGKDGKVLSHGNSFYTGPAPSSNPMVKRDFIDPMQALHGVRKALNLPIKADGAHVEDMSEHKVMFKGTSGALSDPTAKLCYMAKEDGSLALTWRVETDIGDNWLLSYMDAKESSKVHNVVDYVAHATFQVYKWGLADPTEGKREIITNPWNLKTSPLTWLSDGHNNYTATRGNNAIAQYNPDGGNDYENNYRPSPKNLKFEYPYSPDMNPPKTYIDASVTELFYTSNICHDLYYMLGFNEKAGNFQVNNRGQGGKGNDFVILNAQDGSGTNNANFATPPDGQPGRMRAYIWTRANPPRDASFEAGTIIHEYTHGLSNRLCGGPANSRCLNALESGGMGEGWGDFYATAVRLKPNDTRKTNYVKGGWVNNSPKGVRMYPYSTDMNVNPLVYTSNNKLNEVHAIGTVWCTMLYEVLWNLIDKHGKNDGPVPIFENGVPNDGKYLAMKIVMDGMAIQPCNPNFVQARDAILDADMNLTKGANKCEIWKGFAKRGLGVGAKFDPKNRTGSTQVPNECK</sequence>
<dbReference type="EC" id="3.4.24.-"/>
<dbReference type="EMBL" id="AF407186">
    <property type="protein sequence ID" value="AAN03637.1"/>
    <property type="molecule type" value="mRNA"/>
</dbReference>
<dbReference type="EMBL" id="AF407185">
    <property type="protein sequence ID" value="AAN03636.1"/>
    <property type="molecule type" value="Genomic_DNA"/>
</dbReference>
<dbReference type="SMR" id="Q8NIB6"/>
<dbReference type="MEROPS" id="M36.001"/>
<dbReference type="GlyCosmos" id="Q8NIB6">
    <property type="glycosylation" value="4 sites, No reported glycans"/>
</dbReference>
<dbReference type="VEuPathDB" id="FungiDB:TERG_02213"/>
<dbReference type="OMA" id="YIWTRAN"/>
<dbReference type="GO" id="GO:0005576">
    <property type="term" value="C:extracellular region"/>
    <property type="evidence" value="ECO:0007669"/>
    <property type="project" value="UniProtKB-SubCell"/>
</dbReference>
<dbReference type="GO" id="GO:0004222">
    <property type="term" value="F:metalloendopeptidase activity"/>
    <property type="evidence" value="ECO:0007669"/>
    <property type="project" value="InterPro"/>
</dbReference>
<dbReference type="GO" id="GO:0008270">
    <property type="term" value="F:zinc ion binding"/>
    <property type="evidence" value="ECO:0007669"/>
    <property type="project" value="InterPro"/>
</dbReference>
<dbReference type="GO" id="GO:0006508">
    <property type="term" value="P:proteolysis"/>
    <property type="evidence" value="ECO:0007669"/>
    <property type="project" value="UniProtKB-KW"/>
</dbReference>
<dbReference type="CDD" id="cd09596">
    <property type="entry name" value="M36"/>
    <property type="match status" value="1"/>
</dbReference>
<dbReference type="Gene3D" id="3.10.170.10">
    <property type="match status" value="1"/>
</dbReference>
<dbReference type="Gene3D" id="1.10.390.10">
    <property type="entry name" value="Neutral Protease Domain 2"/>
    <property type="match status" value="1"/>
</dbReference>
<dbReference type="InterPro" id="IPR011096">
    <property type="entry name" value="FTP_domain"/>
</dbReference>
<dbReference type="InterPro" id="IPR050371">
    <property type="entry name" value="Fungal_virulence_M36"/>
</dbReference>
<dbReference type="InterPro" id="IPR001842">
    <property type="entry name" value="Peptidase_M36"/>
</dbReference>
<dbReference type="InterPro" id="IPR027268">
    <property type="entry name" value="Peptidase_M4/M1_CTD_sf"/>
</dbReference>
<dbReference type="PANTHER" id="PTHR33478">
    <property type="entry name" value="EXTRACELLULAR METALLOPROTEINASE MEP"/>
    <property type="match status" value="1"/>
</dbReference>
<dbReference type="PANTHER" id="PTHR33478:SF1">
    <property type="entry name" value="EXTRACELLULAR METALLOPROTEINASE MEP"/>
    <property type="match status" value="1"/>
</dbReference>
<dbReference type="Pfam" id="PF07504">
    <property type="entry name" value="FTP"/>
    <property type="match status" value="1"/>
</dbReference>
<dbReference type="Pfam" id="PF02128">
    <property type="entry name" value="Peptidase_M36"/>
    <property type="match status" value="1"/>
</dbReference>
<dbReference type="PRINTS" id="PR00999">
    <property type="entry name" value="FUNGALYSIN"/>
</dbReference>
<dbReference type="SUPFAM" id="SSF55486">
    <property type="entry name" value="Metalloproteases ('zincins'), catalytic domain"/>
    <property type="match status" value="1"/>
</dbReference>
<dbReference type="PROSITE" id="PS00142">
    <property type="entry name" value="ZINC_PROTEASE"/>
    <property type="match status" value="1"/>
</dbReference>
<accession>Q8NIB6</accession>
<proteinExistence type="evidence at protein level"/>
<comment type="function">
    <text evidence="1">Secreted metalloproteinase probably acting as a virulence factor.</text>
</comment>
<comment type="cofactor">
    <cofactor evidence="1">
        <name>Zn(2+)</name>
        <dbReference type="ChEBI" id="CHEBI:29105"/>
    </cofactor>
    <text evidence="1">Binds 1 zinc ion per subunit.</text>
</comment>
<comment type="subcellular location">
    <subcellularLocation>
        <location evidence="4">Secreted</location>
    </subcellularLocation>
</comment>
<comment type="induction">
    <text evidence="5">Expression is strongly increased during growth on protein-rich medium. Expressed at even higher levels when keratin is present in the protein-rich medium.</text>
</comment>
<comment type="similarity">
    <text evidence="6">Belongs to the peptidase M36 family.</text>
</comment>